<protein>
    <recommendedName>
        <fullName evidence="1">Integration host factor subunit beta</fullName>
        <shortName evidence="1">IHF-beta</shortName>
    </recommendedName>
</protein>
<keyword id="KW-0233">DNA recombination</keyword>
<keyword id="KW-0238">DNA-binding</keyword>
<keyword id="KW-1185">Reference proteome</keyword>
<keyword id="KW-0804">Transcription</keyword>
<keyword id="KW-0805">Transcription regulation</keyword>
<keyword id="KW-0810">Translation regulation</keyword>
<gene>
    <name evidence="1" type="primary">ihfB</name>
    <name evidence="1" type="synonym">himD</name>
    <name type="ordered locus">SbBS512_E2416</name>
</gene>
<name>IHFB_SHIB3</name>
<organism>
    <name type="scientific">Shigella boydii serotype 18 (strain CDC 3083-94 / BS512)</name>
    <dbReference type="NCBI Taxonomy" id="344609"/>
    <lineage>
        <taxon>Bacteria</taxon>
        <taxon>Pseudomonadati</taxon>
        <taxon>Pseudomonadota</taxon>
        <taxon>Gammaproteobacteria</taxon>
        <taxon>Enterobacterales</taxon>
        <taxon>Enterobacteriaceae</taxon>
        <taxon>Shigella</taxon>
    </lineage>
</organism>
<evidence type="ECO:0000255" key="1">
    <source>
        <dbReference type="HAMAP-Rule" id="MF_00381"/>
    </source>
</evidence>
<reference key="1">
    <citation type="submission" date="2008-05" db="EMBL/GenBank/DDBJ databases">
        <title>Complete sequence of Shigella boydii serotype 18 strain BS512.</title>
        <authorList>
            <person name="Rasko D.A."/>
            <person name="Rosovitz M."/>
            <person name="Maurelli A.T."/>
            <person name="Myers G."/>
            <person name="Seshadri R."/>
            <person name="Cer R."/>
            <person name="Jiang L."/>
            <person name="Ravel J."/>
            <person name="Sebastian Y."/>
        </authorList>
    </citation>
    <scope>NUCLEOTIDE SEQUENCE [LARGE SCALE GENOMIC DNA]</scope>
    <source>
        <strain>CDC 3083-94 / BS512</strain>
    </source>
</reference>
<dbReference type="EMBL" id="CP001063">
    <property type="protein sequence ID" value="ACD09615.1"/>
    <property type="molecule type" value="Genomic_DNA"/>
</dbReference>
<dbReference type="RefSeq" id="WP_000167336.1">
    <property type="nucleotide sequence ID" value="NC_010658.1"/>
</dbReference>
<dbReference type="SMR" id="B2TUG9"/>
<dbReference type="STRING" id="344609.SbBS512_E2416"/>
<dbReference type="GeneID" id="93776505"/>
<dbReference type="KEGG" id="sbc:SbBS512_E2416"/>
<dbReference type="HOGENOM" id="CLU_105066_2_0_6"/>
<dbReference type="Proteomes" id="UP000001030">
    <property type="component" value="Chromosome"/>
</dbReference>
<dbReference type="GO" id="GO:0005694">
    <property type="term" value="C:chromosome"/>
    <property type="evidence" value="ECO:0007669"/>
    <property type="project" value="InterPro"/>
</dbReference>
<dbReference type="GO" id="GO:0005829">
    <property type="term" value="C:cytosol"/>
    <property type="evidence" value="ECO:0007669"/>
    <property type="project" value="TreeGrafter"/>
</dbReference>
<dbReference type="GO" id="GO:0003677">
    <property type="term" value="F:DNA binding"/>
    <property type="evidence" value="ECO:0007669"/>
    <property type="project" value="UniProtKB-UniRule"/>
</dbReference>
<dbReference type="GO" id="GO:0030527">
    <property type="term" value="F:structural constituent of chromatin"/>
    <property type="evidence" value="ECO:0007669"/>
    <property type="project" value="InterPro"/>
</dbReference>
<dbReference type="GO" id="GO:0006310">
    <property type="term" value="P:DNA recombination"/>
    <property type="evidence" value="ECO:0007669"/>
    <property type="project" value="UniProtKB-UniRule"/>
</dbReference>
<dbReference type="GO" id="GO:0006355">
    <property type="term" value="P:regulation of DNA-templated transcription"/>
    <property type="evidence" value="ECO:0007669"/>
    <property type="project" value="UniProtKB-UniRule"/>
</dbReference>
<dbReference type="GO" id="GO:0006417">
    <property type="term" value="P:regulation of translation"/>
    <property type="evidence" value="ECO:0007669"/>
    <property type="project" value="UniProtKB-UniRule"/>
</dbReference>
<dbReference type="CDD" id="cd13836">
    <property type="entry name" value="IHF_B"/>
    <property type="match status" value="1"/>
</dbReference>
<dbReference type="FunFam" id="4.10.520.10:FF:000003">
    <property type="entry name" value="Integration host factor subunit beta"/>
    <property type="match status" value="1"/>
</dbReference>
<dbReference type="Gene3D" id="4.10.520.10">
    <property type="entry name" value="IHF-like DNA-binding proteins"/>
    <property type="match status" value="1"/>
</dbReference>
<dbReference type="HAMAP" id="MF_00381">
    <property type="entry name" value="IHF_beta"/>
    <property type="match status" value="1"/>
</dbReference>
<dbReference type="InterPro" id="IPR000119">
    <property type="entry name" value="Hist_DNA-bd"/>
</dbReference>
<dbReference type="InterPro" id="IPR020816">
    <property type="entry name" value="Histone-like_DNA-bd_CS"/>
</dbReference>
<dbReference type="InterPro" id="IPR010992">
    <property type="entry name" value="IHF-like_DNA-bd_dom_sf"/>
</dbReference>
<dbReference type="InterPro" id="IPR005685">
    <property type="entry name" value="IHF_beta"/>
</dbReference>
<dbReference type="NCBIfam" id="TIGR00988">
    <property type="entry name" value="hip"/>
    <property type="match status" value="1"/>
</dbReference>
<dbReference type="NCBIfam" id="NF001222">
    <property type="entry name" value="PRK00199.1"/>
    <property type="match status" value="1"/>
</dbReference>
<dbReference type="PANTHER" id="PTHR33175">
    <property type="entry name" value="DNA-BINDING PROTEIN HU"/>
    <property type="match status" value="1"/>
</dbReference>
<dbReference type="PANTHER" id="PTHR33175:SF5">
    <property type="entry name" value="INTEGRATION HOST FACTOR SUBUNIT BETA"/>
    <property type="match status" value="1"/>
</dbReference>
<dbReference type="Pfam" id="PF00216">
    <property type="entry name" value="Bac_DNA_binding"/>
    <property type="match status" value="1"/>
</dbReference>
<dbReference type="PRINTS" id="PR01727">
    <property type="entry name" value="DNABINDINGHU"/>
</dbReference>
<dbReference type="SMART" id="SM00411">
    <property type="entry name" value="BHL"/>
    <property type="match status" value="1"/>
</dbReference>
<dbReference type="SUPFAM" id="SSF47729">
    <property type="entry name" value="IHF-like DNA-binding proteins"/>
    <property type="match status" value="1"/>
</dbReference>
<dbReference type="PROSITE" id="PS00045">
    <property type="entry name" value="HISTONE_LIKE"/>
    <property type="match status" value="1"/>
</dbReference>
<proteinExistence type="inferred from homology"/>
<accession>B2TUG9</accession>
<comment type="function">
    <text evidence="1">This protein is one of the two subunits of integration host factor, a specific DNA-binding protein that functions in genetic recombination as well as in transcriptional and translational control.</text>
</comment>
<comment type="subunit">
    <text evidence="1">Heterodimer of an alpha and a beta chain.</text>
</comment>
<comment type="similarity">
    <text evidence="1">Belongs to the bacterial histone-like protein family.</text>
</comment>
<feature type="chain" id="PRO_1000122244" description="Integration host factor subunit beta">
    <location>
        <begin position="1"/>
        <end position="94"/>
    </location>
</feature>
<sequence>MTKSELIERLATQQSHIPAKTVEDAVKEMLEHMASTLAQGERIEIRGFGSFSLHYRAPRTGRNPKTGDKVELEGKYVPHFKPGKELRDRANIYG</sequence>